<gene>
    <name type="primary">DUO1</name>
    <name type="ordered locus">KLLA0C05742g</name>
</gene>
<reference key="1">
    <citation type="journal article" date="2004" name="Nature">
        <title>Genome evolution in yeasts.</title>
        <authorList>
            <person name="Dujon B."/>
            <person name="Sherman D."/>
            <person name="Fischer G."/>
            <person name="Durrens P."/>
            <person name="Casaregola S."/>
            <person name="Lafontaine I."/>
            <person name="de Montigny J."/>
            <person name="Marck C."/>
            <person name="Neuveglise C."/>
            <person name="Talla E."/>
            <person name="Goffard N."/>
            <person name="Frangeul L."/>
            <person name="Aigle M."/>
            <person name="Anthouard V."/>
            <person name="Babour A."/>
            <person name="Barbe V."/>
            <person name="Barnay S."/>
            <person name="Blanchin S."/>
            <person name="Beckerich J.-M."/>
            <person name="Beyne E."/>
            <person name="Bleykasten C."/>
            <person name="Boisrame A."/>
            <person name="Boyer J."/>
            <person name="Cattolico L."/>
            <person name="Confanioleri F."/>
            <person name="de Daruvar A."/>
            <person name="Despons L."/>
            <person name="Fabre E."/>
            <person name="Fairhead C."/>
            <person name="Ferry-Dumazet H."/>
            <person name="Groppi A."/>
            <person name="Hantraye F."/>
            <person name="Hennequin C."/>
            <person name="Jauniaux N."/>
            <person name="Joyet P."/>
            <person name="Kachouri R."/>
            <person name="Kerrest A."/>
            <person name="Koszul R."/>
            <person name="Lemaire M."/>
            <person name="Lesur I."/>
            <person name="Ma L."/>
            <person name="Muller H."/>
            <person name="Nicaud J.-M."/>
            <person name="Nikolski M."/>
            <person name="Oztas S."/>
            <person name="Ozier-Kalogeropoulos O."/>
            <person name="Pellenz S."/>
            <person name="Potier S."/>
            <person name="Richard G.-F."/>
            <person name="Straub M.-L."/>
            <person name="Suleau A."/>
            <person name="Swennen D."/>
            <person name="Tekaia F."/>
            <person name="Wesolowski-Louvel M."/>
            <person name="Westhof E."/>
            <person name="Wirth B."/>
            <person name="Zeniou-Meyer M."/>
            <person name="Zivanovic Y."/>
            <person name="Bolotin-Fukuhara M."/>
            <person name="Thierry A."/>
            <person name="Bouchier C."/>
            <person name="Caudron B."/>
            <person name="Scarpelli C."/>
            <person name="Gaillardin C."/>
            <person name="Weissenbach J."/>
            <person name="Wincker P."/>
            <person name="Souciet J.-L."/>
        </authorList>
    </citation>
    <scope>NUCLEOTIDE SEQUENCE [LARGE SCALE GENOMIC DNA]</scope>
    <source>
        <strain>ATCC 8585 / CBS 2359 / DSM 70799 / NBRC 1267 / NRRL Y-1140 / WM37</strain>
    </source>
</reference>
<protein>
    <recommendedName>
        <fullName>DASH complex subunit DUO1</fullName>
    </recommendedName>
    <alternativeName>
        <fullName>Outer kinetochore protein DUO1</fullName>
    </alternativeName>
</protein>
<accession>Q6CUD4</accession>
<organism>
    <name type="scientific">Kluyveromyces lactis (strain ATCC 8585 / CBS 2359 / DSM 70799 / NBRC 1267 / NRRL Y-1140 / WM37)</name>
    <name type="common">Yeast</name>
    <name type="synonym">Candida sphaerica</name>
    <dbReference type="NCBI Taxonomy" id="284590"/>
    <lineage>
        <taxon>Eukaryota</taxon>
        <taxon>Fungi</taxon>
        <taxon>Dikarya</taxon>
        <taxon>Ascomycota</taxon>
        <taxon>Saccharomycotina</taxon>
        <taxon>Saccharomycetes</taxon>
        <taxon>Saccharomycetales</taxon>
        <taxon>Saccharomycetaceae</taxon>
        <taxon>Kluyveromyces</taxon>
    </lineage>
</organism>
<feature type="chain" id="PRO_0000215593" description="DASH complex subunit DUO1">
    <location>
        <begin position="1"/>
        <end position="208"/>
    </location>
</feature>
<feature type="region of interest" description="Disordered" evidence="4">
    <location>
        <begin position="140"/>
        <end position="208"/>
    </location>
</feature>
<feature type="coiled-coil region" evidence="3">
    <location>
        <begin position="115"/>
        <end position="144"/>
    </location>
</feature>
<feature type="compositionally biased region" description="Low complexity" evidence="4">
    <location>
        <begin position="181"/>
        <end position="201"/>
    </location>
</feature>
<sequence length="208" mass="23525">MVEHKLDASTISKMIPQIFDQMRRQTGSKNFASTPASISTQSLLKEQEQLDKIIPVIQNLNERIKDCKEGDMERIKETCHAMNTILDKFISIQSQASYVNSMMNNEEYLDYVASGKSEEEYISAKQREVEELEKRVKQYTTMHAPSVKPPASKIPVGNDTRKVTKPGQRNGRSGLYSISTRNNSNNSGANGRRPPGNGNNVGRRRVYR</sequence>
<name>DUO1_KLULA</name>
<comment type="function">
    <text evidence="2">Component of the DASH complex that connects microtubules with kinetochores and couples microtubule depolymerisation to chromosome movement; it is involved in retrieving kinetochores to the spindle poles before their re-orientation on the spindle in early mitosis and allows microtubule depolymerization to pull chromosomes apart and resist detachment during anaphase. Kinetochores, consisting of a centromere-associated inner segment and a microtubule-contacting outer segment, play a crucial role in chromosome segregation by mediating the physical connection between centromeric DNA and microtubules. Kinetochores also serve as an input point for the spindle assembly checkpoint, which delays anaphase until all chromosomes have bioriented on the mitotic spindle.</text>
</comment>
<comment type="subunit">
    <text evidence="1 2">Component of the DASH complex consisting of ASK1, DAD1, DAD2, DAD3, DAD4, DAM1, DUO1, HSK3, SPC19 and SPC34, with a stoichiometry of one copy of each subunit per complex. Multiple DASH complexes oligomerize to form a ring that encircles spindle microtubules and organizes the rod-like NDC80 complexes of the outer kinetochore. DASH complex oligomerization strengthens microtubule attachments (By similarity). On cytoplasmic microtubules, DASH complexes appear to form patches instead of rings (By similarity). Within the complex, DAM1 and DUO1 may form the microtubule connections (By similarity).</text>
</comment>
<comment type="subcellular location">
    <subcellularLocation>
        <location evidence="2">Nucleus</location>
    </subcellularLocation>
    <subcellularLocation>
        <location evidence="2">Cytoplasm</location>
        <location evidence="2">Cytoskeleton</location>
        <location evidence="2">Spindle pole</location>
    </subcellularLocation>
    <subcellularLocation>
        <location evidence="2">Chromosome</location>
        <location evidence="2">Centromere</location>
        <location evidence="2">Kinetochore</location>
    </subcellularLocation>
</comment>
<comment type="similarity">
    <text evidence="5">Belongs to the DASH complex DUO1 family.</text>
</comment>
<proteinExistence type="inferred from homology"/>
<evidence type="ECO:0000250" key="1">
    <source>
        <dbReference type="UniProtKB" id="O74372"/>
    </source>
</evidence>
<evidence type="ECO:0000250" key="2">
    <source>
        <dbReference type="UniProtKB" id="P53168"/>
    </source>
</evidence>
<evidence type="ECO:0000255" key="3"/>
<evidence type="ECO:0000256" key="4">
    <source>
        <dbReference type="SAM" id="MobiDB-lite"/>
    </source>
</evidence>
<evidence type="ECO:0000305" key="5"/>
<keyword id="KW-0131">Cell cycle</keyword>
<keyword id="KW-0132">Cell division</keyword>
<keyword id="KW-0137">Centromere</keyword>
<keyword id="KW-0158">Chromosome</keyword>
<keyword id="KW-0159">Chromosome partition</keyword>
<keyword id="KW-0175">Coiled coil</keyword>
<keyword id="KW-0963">Cytoplasm</keyword>
<keyword id="KW-0206">Cytoskeleton</keyword>
<keyword id="KW-0995">Kinetochore</keyword>
<keyword id="KW-0493">Microtubule</keyword>
<keyword id="KW-0498">Mitosis</keyword>
<keyword id="KW-0539">Nucleus</keyword>
<keyword id="KW-1185">Reference proteome</keyword>
<dbReference type="EMBL" id="CR382123">
    <property type="protein sequence ID" value="CAH01306.1"/>
    <property type="molecule type" value="Genomic_DNA"/>
</dbReference>
<dbReference type="RefSeq" id="XP_452455.1">
    <property type="nucleotide sequence ID" value="XM_452455.1"/>
</dbReference>
<dbReference type="SMR" id="Q6CUD4"/>
<dbReference type="FunCoup" id="Q6CUD4">
    <property type="interactions" value="82"/>
</dbReference>
<dbReference type="STRING" id="284590.Q6CUD4"/>
<dbReference type="PaxDb" id="284590-Q6CUD4"/>
<dbReference type="KEGG" id="kla:KLLA0_C05742g"/>
<dbReference type="eggNOG" id="ENOG502SB8M">
    <property type="taxonomic scope" value="Eukaryota"/>
</dbReference>
<dbReference type="HOGENOM" id="CLU_114619_0_0_1"/>
<dbReference type="InParanoid" id="Q6CUD4"/>
<dbReference type="Proteomes" id="UP000000598">
    <property type="component" value="Chromosome C"/>
</dbReference>
<dbReference type="GO" id="GO:0005737">
    <property type="term" value="C:cytoplasm"/>
    <property type="evidence" value="ECO:0007669"/>
    <property type="project" value="UniProtKB-KW"/>
</dbReference>
<dbReference type="GO" id="GO:0042729">
    <property type="term" value="C:DASH complex"/>
    <property type="evidence" value="ECO:0000250"/>
    <property type="project" value="UniProtKB"/>
</dbReference>
<dbReference type="GO" id="GO:0005874">
    <property type="term" value="C:microtubule"/>
    <property type="evidence" value="ECO:0007669"/>
    <property type="project" value="UniProtKB-KW"/>
</dbReference>
<dbReference type="GO" id="GO:0072686">
    <property type="term" value="C:mitotic spindle"/>
    <property type="evidence" value="ECO:0007669"/>
    <property type="project" value="InterPro"/>
</dbReference>
<dbReference type="GO" id="GO:0000922">
    <property type="term" value="C:spindle pole"/>
    <property type="evidence" value="ECO:0007669"/>
    <property type="project" value="UniProtKB-SubCell"/>
</dbReference>
<dbReference type="GO" id="GO:0008608">
    <property type="term" value="P:attachment of spindle microtubules to kinetochore"/>
    <property type="evidence" value="ECO:0000250"/>
    <property type="project" value="UniProtKB"/>
</dbReference>
<dbReference type="GO" id="GO:0051301">
    <property type="term" value="P:cell division"/>
    <property type="evidence" value="ECO:0007669"/>
    <property type="project" value="UniProtKB-KW"/>
</dbReference>
<dbReference type="GO" id="GO:1990758">
    <property type="term" value="P:mitotic sister chromatid biorientation"/>
    <property type="evidence" value="ECO:0000250"/>
    <property type="project" value="UniProtKB"/>
</dbReference>
<dbReference type="GO" id="GO:1990976">
    <property type="term" value="P:protein transport along microtubule to mitotic spindle pole body"/>
    <property type="evidence" value="ECO:0000250"/>
    <property type="project" value="UniProtKB"/>
</dbReference>
<dbReference type="InterPro" id="IPR013960">
    <property type="entry name" value="DASH_Duo1"/>
</dbReference>
<dbReference type="PANTHER" id="PTHR28216">
    <property type="entry name" value="DASH COMPLEX SUBUNIT DUO1"/>
    <property type="match status" value="1"/>
</dbReference>
<dbReference type="PANTHER" id="PTHR28216:SF1">
    <property type="entry name" value="DASH COMPLEX SUBUNIT DUO1"/>
    <property type="match status" value="1"/>
</dbReference>
<dbReference type="Pfam" id="PF08651">
    <property type="entry name" value="DASH_Duo1"/>
    <property type="match status" value="1"/>
</dbReference>